<proteinExistence type="evidence at protein level"/>
<sequence>MNFKYIIAVSFFIASAYARRNEKDVQSLSQRDVLEEESLREIRGIGGVLLSAGKAALKGLAKVLAEKYANGKRTAEDHEVMKRLEAVMRDLDSLDHPEEASERETRGFNQEEIANLFTKKEKRILGPVLGLVGNALGGLIKKIG</sequence>
<comment type="function">
    <text>Maximin-4 shows antibacterial activity against both Gram-positive and Gram-negative bacteria. It also shows antimicrobial activity against the fungus C.albicans, but not against A.flavus nor P.uticale. It has little hemolytic activity. It does not possess a significant cytotoxicity against tumor cell lines. It does not possess a significant anti-HIV activity.</text>
</comment>
<comment type="function">
    <text>Maximin-H3 shows antibacterial activity against both Gram-positive and Gram-negative bacteria. It also shows antimicrobial activity against the fungus C.albicans. Shows strong hemolytic activity.</text>
</comment>
<comment type="subcellular location">
    <subcellularLocation>
        <location evidence="4">Secreted</location>
    </subcellularLocation>
</comment>
<comment type="tissue specificity">
    <text evidence="4">Expressed by the skin glands.</text>
</comment>
<comment type="mass spectrometry">
    <molecule>Maximin-4</molecule>
</comment>
<comment type="mass spectrometry">
    <molecule>Maximin-H3</molecule>
</comment>
<comment type="similarity">
    <text evidence="5">Belongs to the bombinin family.</text>
</comment>
<accession>Q58T79</accession>
<reference key="1">
    <citation type="journal article" date="2005" name="Eur. J. Immunol.">
        <title>Variety of antimicrobial peptides in the Bombina maxima toad and evidence of their rapid diversification.</title>
        <authorList>
            <person name="Lee W.-H."/>
            <person name="Li Y."/>
            <person name="Lai R."/>
            <person name="Li S."/>
            <person name="Zhang Y."/>
            <person name="Wang W."/>
        </authorList>
    </citation>
    <scope>NUCLEOTIDE SEQUENCE [MRNA]</scope>
    <scope>AMIDATION AT ASN-70 AND ILE-143</scope>
    <source>
        <tissue>Skin</tissue>
    </source>
</reference>
<reference key="2">
    <citation type="submission" date="2001-07" db="UniProtKB">
        <title>Isolation and structural characterisation of antimicrobial peptides from the venom of the Chinese large-webbed bell toad (Bombina maxima).</title>
        <authorList>
            <person name="Chen T.B."/>
            <person name="McClean S."/>
            <person name="Orr D.F."/>
            <person name="Bjourson A.J."/>
            <person name="Rao P.F."/>
            <person name="Shaw C."/>
        </authorList>
    </citation>
    <scope>PROTEIN SEQUENCE OF 44-70</scope>
    <scope>FUNCTION OF MAXIMIN-4</scope>
    <scope>SUBCELLULAR LOCATION</scope>
    <scope>TISSUE SPECIFICITY</scope>
    <source>
        <tissue>Skin secretion</tissue>
    </source>
</reference>
<reference key="3">
    <citation type="journal article" date="2002" name="Peptides">
        <title>Antimicrobial peptides from skin secretions of Chinese red belly toad Bombina maxima.</title>
        <authorList>
            <person name="Lai R."/>
            <person name="Zheng Y.-T."/>
            <person name="Shen J.-H."/>
            <person name="Liu G.-J."/>
            <person name="Liu H."/>
            <person name="Lee W.-H."/>
            <person name="Tang S.-Z."/>
            <person name="Zhang Y."/>
        </authorList>
    </citation>
    <scope>PROTEIN SEQUENCE OF 44-70 AND 124-143</scope>
    <scope>AMIDATION AT ASN-70 AND ILE-143</scope>
    <scope>FUNCTION OF MAXIMIN-4 AND MAXIMIN-H3</scope>
    <scope>MASS SPECTROMETRY</scope>
    <source>
        <tissue>Skin</tissue>
        <tissue>Skin secretion</tissue>
    </source>
</reference>
<keyword id="KW-0027">Amidation</keyword>
<keyword id="KW-0878">Amphibian defense peptide</keyword>
<keyword id="KW-0044">Antibiotic</keyword>
<keyword id="KW-0929">Antimicrobial</keyword>
<keyword id="KW-0165">Cleavage on pair of basic residues</keyword>
<keyword id="KW-0204">Cytolysis</keyword>
<keyword id="KW-0903">Direct protein sequencing</keyword>
<keyword id="KW-0295">Fungicide</keyword>
<keyword id="KW-0354">Hemolysis</keyword>
<keyword id="KW-0964">Secreted</keyword>
<keyword id="KW-0732">Signal</keyword>
<dbReference type="EMBL" id="AY848981">
    <property type="protein sequence ID" value="AAX50202.1"/>
    <property type="molecule type" value="mRNA"/>
</dbReference>
<dbReference type="SMR" id="Q58T79"/>
<dbReference type="GO" id="GO:0005576">
    <property type="term" value="C:extracellular region"/>
    <property type="evidence" value="ECO:0007669"/>
    <property type="project" value="UniProtKB-SubCell"/>
</dbReference>
<dbReference type="GO" id="GO:0042742">
    <property type="term" value="P:defense response to bacterium"/>
    <property type="evidence" value="ECO:0007669"/>
    <property type="project" value="UniProtKB-KW"/>
</dbReference>
<dbReference type="GO" id="GO:0050832">
    <property type="term" value="P:defense response to fungus"/>
    <property type="evidence" value="ECO:0007669"/>
    <property type="project" value="UniProtKB-KW"/>
</dbReference>
<dbReference type="GO" id="GO:0031640">
    <property type="term" value="P:killing of cells of another organism"/>
    <property type="evidence" value="ECO:0007669"/>
    <property type="project" value="UniProtKB-KW"/>
</dbReference>
<dbReference type="InterPro" id="IPR007962">
    <property type="entry name" value="Bombinin"/>
</dbReference>
<dbReference type="Pfam" id="PF05298">
    <property type="entry name" value="Bombinin"/>
    <property type="match status" value="1"/>
</dbReference>
<organism>
    <name type="scientific">Bombina maxima</name>
    <name type="common">Giant fire-bellied toad</name>
    <name type="synonym">Chinese red belly toad</name>
    <dbReference type="NCBI Taxonomy" id="161274"/>
    <lineage>
        <taxon>Eukaryota</taxon>
        <taxon>Metazoa</taxon>
        <taxon>Chordata</taxon>
        <taxon>Craniata</taxon>
        <taxon>Vertebrata</taxon>
        <taxon>Euteleostomi</taxon>
        <taxon>Amphibia</taxon>
        <taxon>Batrachia</taxon>
        <taxon>Anura</taxon>
        <taxon>Bombinatoridae</taxon>
        <taxon>Bombina</taxon>
    </lineage>
</organism>
<name>M4H32_BOMMX</name>
<feature type="signal peptide" evidence="1">
    <location>
        <begin position="1"/>
        <end position="18"/>
    </location>
</feature>
<feature type="propeptide" id="PRO_0000003156">
    <location>
        <begin position="19"/>
        <end position="43"/>
    </location>
</feature>
<feature type="peptide" id="PRO_0000003157" description="Maximin-4">
    <location>
        <begin position="44"/>
        <end position="70"/>
    </location>
</feature>
<feature type="propeptide" id="PRO_0000003158" evidence="2">
    <location>
        <begin position="74"/>
        <end position="123"/>
    </location>
</feature>
<feature type="peptide" id="PRO_0000003159" description="Maximin-H3">
    <location>
        <begin position="124"/>
        <end position="143"/>
    </location>
</feature>
<feature type="modified residue" description="Asparagine amide" evidence="2 3">
    <location>
        <position position="70"/>
    </location>
</feature>
<feature type="modified residue" description="Isoleucine amide" evidence="2 3">
    <location>
        <position position="143"/>
    </location>
</feature>
<evidence type="ECO:0000255" key="1"/>
<evidence type="ECO:0000269" key="2">
    <source>
    </source>
</evidence>
<evidence type="ECO:0000269" key="3">
    <source>
    </source>
</evidence>
<evidence type="ECO:0000269" key="4">
    <source ref="2"/>
</evidence>
<evidence type="ECO:0000305" key="5"/>
<protein>
    <recommendedName>
        <fullName>Maximins 4/H3 type 2</fullName>
    </recommendedName>
    <component>
        <recommendedName>
            <fullName>Maximin-4</fullName>
        </recommendedName>
    </component>
    <component>
        <recommendedName>
            <fullName>Maximin-H3</fullName>
        </recommendedName>
    </component>
</protein>